<comment type="function">
    <text evidence="1">Excises uracil residues from the DNA which can arise as a result of misincorporation of dUMP residues by DNA polymerase or deamination of cytosines. Therefore may reduce deleterious uracil incorporation into the viral genome, particularly in terminally differentiated cells which lack DNA repair enzymes.</text>
</comment>
<comment type="catalytic activity">
    <reaction evidence="1">
        <text>Hydrolyzes single-stranded DNA or mismatched double-stranded DNA and polynucleotides, releasing free uracil.</text>
        <dbReference type="EC" id="3.2.2.27"/>
    </reaction>
</comment>
<comment type="subcellular location">
    <subcellularLocation>
        <location evidence="1">Host nucleus</location>
    </subcellularLocation>
</comment>
<comment type="similarity">
    <text evidence="1">Belongs to the uracil-DNA glycosylase (UDG) superfamily. UNG family.</text>
</comment>
<keyword id="KW-0227">DNA damage</keyword>
<keyword id="KW-0234">DNA repair</keyword>
<keyword id="KW-1048">Host nucleus</keyword>
<keyword id="KW-0378">Hydrolase</keyword>
<protein>
    <recommendedName>
        <fullName evidence="1">Uracil-DNA glycosylase</fullName>
        <shortName evidence="1">UDG</shortName>
        <ecNumber evidence="1">3.2.2.27</ecNumber>
    </recommendedName>
    <alternativeName>
        <fullName evidence="1">UNG</fullName>
    </alternativeName>
</protein>
<organismHost>
    <name type="scientific">Sus scrofa</name>
    <name type="common">Pig</name>
    <dbReference type="NCBI Taxonomy" id="9823"/>
</organismHost>
<sequence length="316" mass="32998">MEGPPPSKRPCGLPPGVRLVVPAAAAASASNAATAAAAAAPAGAGAGASKPARPSAAARPAKGTPAASAATTATGADASAPPPDPGAPTWDAFAAEFDVAPSWRALLEPEIAKPYARLLLAEYRGRCLTEEVLPAREDVFAWTRLTAPEDVKVVIIGQDPYHGPGQAHGLAFSVRRGVPIPPSLANIFAAVRATYPTLPAPAHGCLEAWARRGVLLLNTTLTVRRGVPGSHAPLGWARLVRAVVQRLCETRPKLVFMLWGAHAQKACAPDPRRHKVLTFSHPSPLARTPFRTCPHFGEANAYLVQTGRAPVDWSVD</sequence>
<name>UNG_SUHVK</name>
<proteinExistence type="inferred from homology"/>
<reference key="1">
    <citation type="journal article" date="1994" name="J. Virol.">
        <title>Identification and characterization of a novel structural glycoprotein in pseudorabies virus, gL.</title>
        <authorList>
            <person name="Klupp B.G."/>
            <person name="Baumeister J."/>
            <person name="Karger A."/>
            <person name="Visser N."/>
            <person name="Mettenleiter T.C."/>
        </authorList>
    </citation>
    <scope>NUCLEOTIDE SEQUENCE</scope>
</reference>
<gene>
    <name type="primary">UL2</name>
</gene>
<evidence type="ECO:0000255" key="1">
    <source>
        <dbReference type="HAMAP-Rule" id="MF_04046"/>
    </source>
</evidence>
<evidence type="ECO:0000256" key="2">
    <source>
        <dbReference type="SAM" id="MobiDB-lite"/>
    </source>
</evidence>
<accession>P52507</accession>
<organism>
    <name type="scientific">Suid herpesvirus 1 (strain Kaplan)</name>
    <name type="common">SuHV-1</name>
    <name type="synonym">Pseudorabies virus (strain Kaplan)</name>
    <dbReference type="NCBI Taxonomy" id="33703"/>
    <lineage>
        <taxon>Viruses</taxon>
        <taxon>Duplodnaviria</taxon>
        <taxon>Heunggongvirae</taxon>
        <taxon>Peploviricota</taxon>
        <taxon>Herviviricetes</taxon>
        <taxon>Herpesvirales</taxon>
        <taxon>Orthoherpesviridae</taxon>
        <taxon>Alphaherpesvirinae</taxon>
        <taxon>Varicellovirus</taxon>
        <taxon>Varicellovirus suidalpha1</taxon>
        <taxon>Suid herpesvirus 1</taxon>
    </lineage>
</organism>
<dbReference type="EC" id="3.2.2.27" evidence="1"/>
<dbReference type="EMBL" id="U02513">
    <property type="protein sequence ID" value="AAA18859.1"/>
    <property type="molecule type" value="Unassigned_DNA"/>
</dbReference>
<dbReference type="RefSeq" id="YP_068375.1">
    <property type="nucleotide sequence ID" value="NC_006151.1"/>
</dbReference>
<dbReference type="SMR" id="P52507"/>
<dbReference type="GeneID" id="2952528"/>
<dbReference type="KEGG" id="vg:2952528"/>
<dbReference type="GO" id="GO:0042025">
    <property type="term" value="C:host cell nucleus"/>
    <property type="evidence" value="ECO:0007669"/>
    <property type="project" value="UniProtKB-SubCell"/>
</dbReference>
<dbReference type="GO" id="GO:0004844">
    <property type="term" value="F:uracil DNA N-glycosylase activity"/>
    <property type="evidence" value="ECO:0007669"/>
    <property type="project" value="UniProtKB-EC"/>
</dbReference>
<dbReference type="GO" id="GO:0097510">
    <property type="term" value="P:base-excision repair, AP site formation via deaminated base removal"/>
    <property type="evidence" value="ECO:0007669"/>
    <property type="project" value="TreeGrafter"/>
</dbReference>
<dbReference type="CDD" id="cd10027">
    <property type="entry name" value="UDG-F1-like"/>
    <property type="match status" value="1"/>
</dbReference>
<dbReference type="Gene3D" id="3.40.470.10">
    <property type="entry name" value="Uracil-DNA glycosylase-like domain"/>
    <property type="match status" value="1"/>
</dbReference>
<dbReference type="HAMAP" id="MF_00148">
    <property type="entry name" value="UDG"/>
    <property type="match status" value="1"/>
</dbReference>
<dbReference type="InterPro" id="IPR002043">
    <property type="entry name" value="UDG_fam1"/>
</dbReference>
<dbReference type="InterPro" id="IPR018085">
    <property type="entry name" value="Ura-DNA_Glyclase_AS"/>
</dbReference>
<dbReference type="InterPro" id="IPR005122">
    <property type="entry name" value="Uracil-DNA_glycosylase-like"/>
</dbReference>
<dbReference type="InterPro" id="IPR036895">
    <property type="entry name" value="Uracil-DNA_glycosylase-like_sf"/>
</dbReference>
<dbReference type="NCBIfam" id="NF003588">
    <property type="entry name" value="PRK05254.1-1"/>
    <property type="match status" value="1"/>
</dbReference>
<dbReference type="NCBIfam" id="NF003589">
    <property type="entry name" value="PRK05254.1-2"/>
    <property type="match status" value="1"/>
</dbReference>
<dbReference type="NCBIfam" id="NF003592">
    <property type="entry name" value="PRK05254.1-5"/>
    <property type="match status" value="1"/>
</dbReference>
<dbReference type="NCBIfam" id="TIGR00628">
    <property type="entry name" value="ung"/>
    <property type="match status" value="1"/>
</dbReference>
<dbReference type="PANTHER" id="PTHR11264">
    <property type="entry name" value="URACIL-DNA GLYCOSYLASE"/>
    <property type="match status" value="1"/>
</dbReference>
<dbReference type="PANTHER" id="PTHR11264:SF0">
    <property type="entry name" value="URACIL-DNA GLYCOSYLASE"/>
    <property type="match status" value="1"/>
</dbReference>
<dbReference type="Pfam" id="PF03167">
    <property type="entry name" value="UDG"/>
    <property type="match status" value="1"/>
</dbReference>
<dbReference type="SMART" id="SM00986">
    <property type="entry name" value="UDG"/>
    <property type="match status" value="1"/>
</dbReference>
<dbReference type="SMART" id="SM00987">
    <property type="entry name" value="UreE_C"/>
    <property type="match status" value="1"/>
</dbReference>
<dbReference type="SUPFAM" id="SSF52141">
    <property type="entry name" value="Uracil-DNA glycosylase-like"/>
    <property type="match status" value="1"/>
</dbReference>
<dbReference type="PROSITE" id="PS00130">
    <property type="entry name" value="U_DNA_GLYCOSYLASE"/>
    <property type="match status" value="1"/>
</dbReference>
<feature type="chain" id="PRO_0000176196" description="Uracil-DNA glycosylase">
    <location>
        <begin position="1"/>
        <end position="316"/>
    </location>
</feature>
<feature type="region of interest" description="Disordered" evidence="2">
    <location>
        <begin position="36"/>
        <end position="91"/>
    </location>
</feature>
<feature type="compositionally biased region" description="Low complexity" evidence="2">
    <location>
        <begin position="36"/>
        <end position="79"/>
    </location>
</feature>
<feature type="active site" description="Proton acceptor" evidence="1">
    <location>
        <position position="159"/>
    </location>
</feature>